<proteinExistence type="inferred from homology"/>
<feature type="chain" id="PRO_0000300355" description="DNA-directed RNA polymerase subunit beta">
    <location>
        <begin position="1"/>
        <end position="1167"/>
    </location>
</feature>
<sequence>MLEGCILAGSRQIESTTNNSVPGAPNRISFAKLREPLEVPGLLDVQTESFEWLIGAEDWFQRAADRGDVDPKGGLQEVLEELSPIEDFSGSMSLSFSDPRFDEVKAPVDECKDKDMTYAAPLFVTAEFINNNTGEIKSQTVFMGDFPMMTEKGTFIINGTERVVVSQLVRSPGVYFDESIDKSTEKTLHSVKVIPGRGAWLEFDVDKRDTVGVRIDRKRRQPVTVLLKALGWTNEQIVERFGFSEIMMSTLEKDNTAGTDEALLDIYRKLRPGEPPTKESAQTLLENLFFKEKRYDLARVGRYKVNKKLGLNVGQPITSSTLTEEDVVATIEYLVRLHQGDQTMTAPGGSEVPVEVDDIDHFGNRRLRTVGELIQNQIRVGLSRMERVVRERMTTQDVEAITPQTLINIRPVVAAIKEFFGTSQLSQFMDQNNPLSGLTHKRRLSALGPGGLSRERAGLEVRDVHSSHYGRMCPIETPEGPNIGLIGSLSVYARVNPFGFIETPYRKVTDGVVTDQIDYLTADEEDRHVVAQANSPLDGDGHFEEERVLVRRKGGEVEFVSAAEVDYMDVSPRQMVSVATAMIPFLEHDDANRALMGANMQRQAVPLVRSEAPLVGTGMELRAAIDAGDVVVTEKAGVVEEVSADYITVMADDGTRHTYRMRKFARSNHGTCANQRPIVDAGQRVESGQVLADGPCTENGEMALGKNLLVAIMPWEGHNYEDAIILSNRLVEEDVLTSIHIEEHEIDARDTKLGAEEITRDIPNVSDEVLADLDERGIIRIGAEVRDGDILVGKVTPKGETELTPEERLLRAIFGEKAREVRDTSLKVPHGESGKVIGIRVFSREDDDELPAGVNELVRVYVAQKRKISDGDKLAGRHGNKGVIGKILPVEDMPFLPDGTPVDIILNTHGVPRRMNIGQILETHLGWVAKAGWNIDVAAGTPEWAAKLPEQMLSAPADSIVATPVFDGAQEGELQGLLGSTLPNRDGETMVNADGKATLFDGRSGEPFPYPVTVGYMYILKLHHLVDDKIHARSTGPYSMITQQPLGGKAQFGGQRFGEMECWAMQAYGAAYTLQELLTIKSDDTVGRVKVYEAIVKGENIPEPGIPESFKVLLKELQSLCLNVEVLSSDGAAIEMRDGDDEDLERAAANLGINLSRNESASVEDLA</sequence>
<name>RPOB_MYCVP</name>
<gene>
    <name evidence="1" type="primary">rpoB</name>
    <name type="ordered locus">Mvan_1257</name>
</gene>
<organism>
    <name type="scientific">Mycolicibacterium vanbaalenii (strain DSM 7251 / JCM 13017 / BCRC 16820 / KCTC 9966 / NRRL B-24157 / PYR-1)</name>
    <name type="common">Mycobacterium vanbaalenii</name>
    <dbReference type="NCBI Taxonomy" id="350058"/>
    <lineage>
        <taxon>Bacteria</taxon>
        <taxon>Bacillati</taxon>
        <taxon>Actinomycetota</taxon>
        <taxon>Actinomycetes</taxon>
        <taxon>Mycobacteriales</taxon>
        <taxon>Mycobacteriaceae</taxon>
        <taxon>Mycolicibacterium</taxon>
    </lineage>
</organism>
<protein>
    <recommendedName>
        <fullName evidence="1">DNA-directed RNA polymerase subunit beta</fullName>
        <shortName evidence="1">RNAP subunit beta</shortName>
        <ecNumber evidence="1">2.7.7.6</ecNumber>
    </recommendedName>
    <alternativeName>
        <fullName evidence="1">RNA polymerase subunit beta</fullName>
    </alternativeName>
    <alternativeName>
        <fullName evidence="1">Transcriptase subunit beta</fullName>
    </alternativeName>
</protein>
<evidence type="ECO:0000255" key="1">
    <source>
        <dbReference type="HAMAP-Rule" id="MF_01321"/>
    </source>
</evidence>
<evidence type="ECO:0000305" key="2"/>
<comment type="function">
    <text evidence="1">DNA-dependent RNA polymerase catalyzes the transcription of DNA into RNA using the four ribonucleoside triphosphates as substrates.</text>
</comment>
<comment type="catalytic activity">
    <reaction evidence="1">
        <text>RNA(n) + a ribonucleoside 5'-triphosphate = RNA(n+1) + diphosphate</text>
        <dbReference type="Rhea" id="RHEA:21248"/>
        <dbReference type="Rhea" id="RHEA-COMP:14527"/>
        <dbReference type="Rhea" id="RHEA-COMP:17342"/>
        <dbReference type="ChEBI" id="CHEBI:33019"/>
        <dbReference type="ChEBI" id="CHEBI:61557"/>
        <dbReference type="ChEBI" id="CHEBI:140395"/>
        <dbReference type="EC" id="2.7.7.6"/>
    </reaction>
</comment>
<comment type="subunit">
    <text evidence="1">The RNAP catalytic core consists of 2 alpha, 1 beta, 1 beta' and 1 omega subunit. When a sigma factor is associated with the core the holoenzyme is formed, which can initiate transcription.</text>
</comment>
<comment type="similarity">
    <text evidence="1">Belongs to the RNA polymerase beta chain family.</text>
</comment>
<comment type="sequence caution" evidence="2">
    <conflict type="erroneous initiation">
        <sequence resource="EMBL-CDS" id="ABM12092"/>
    </conflict>
</comment>
<keyword id="KW-0240">DNA-directed RNA polymerase</keyword>
<keyword id="KW-0548">Nucleotidyltransferase</keyword>
<keyword id="KW-0804">Transcription</keyword>
<keyword id="KW-0808">Transferase</keyword>
<accession>A1T4J2</accession>
<reference key="1">
    <citation type="submission" date="2006-12" db="EMBL/GenBank/DDBJ databases">
        <title>Complete sequence of Mycobacterium vanbaalenii PYR-1.</title>
        <authorList>
            <consortium name="US DOE Joint Genome Institute"/>
            <person name="Copeland A."/>
            <person name="Lucas S."/>
            <person name="Lapidus A."/>
            <person name="Barry K."/>
            <person name="Detter J.C."/>
            <person name="Glavina del Rio T."/>
            <person name="Hammon N."/>
            <person name="Israni S."/>
            <person name="Dalin E."/>
            <person name="Tice H."/>
            <person name="Pitluck S."/>
            <person name="Singan V."/>
            <person name="Schmutz J."/>
            <person name="Larimer F."/>
            <person name="Land M."/>
            <person name="Hauser L."/>
            <person name="Kyrpides N."/>
            <person name="Anderson I.J."/>
            <person name="Miller C."/>
            <person name="Richardson P."/>
        </authorList>
    </citation>
    <scope>NUCLEOTIDE SEQUENCE [LARGE SCALE GENOMIC DNA]</scope>
    <source>
        <strain>DSM 7251 / JCM 13017 / BCRC 16820 / KCTC 9966 / NRRL B-24157 / PYR-1</strain>
    </source>
</reference>
<dbReference type="EC" id="2.7.7.6" evidence="1"/>
<dbReference type="EMBL" id="CP000511">
    <property type="protein sequence ID" value="ABM12092.1"/>
    <property type="status" value="ALT_INIT"/>
    <property type="molecule type" value="Genomic_DNA"/>
</dbReference>
<dbReference type="RefSeq" id="WP_036370198.1">
    <property type="nucleotide sequence ID" value="NZ_JACKSD010000070.1"/>
</dbReference>
<dbReference type="SMR" id="A1T4J2"/>
<dbReference type="STRING" id="350058.Mvan_1257"/>
<dbReference type="KEGG" id="mva:Mvan_1257"/>
<dbReference type="eggNOG" id="COG0085">
    <property type="taxonomic scope" value="Bacteria"/>
</dbReference>
<dbReference type="HOGENOM" id="CLU_000524_4_1_11"/>
<dbReference type="Proteomes" id="UP000009159">
    <property type="component" value="Chromosome"/>
</dbReference>
<dbReference type="GO" id="GO:0000428">
    <property type="term" value="C:DNA-directed RNA polymerase complex"/>
    <property type="evidence" value="ECO:0007669"/>
    <property type="project" value="UniProtKB-KW"/>
</dbReference>
<dbReference type="GO" id="GO:0003677">
    <property type="term" value="F:DNA binding"/>
    <property type="evidence" value="ECO:0007669"/>
    <property type="project" value="UniProtKB-UniRule"/>
</dbReference>
<dbReference type="GO" id="GO:0003899">
    <property type="term" value="F:DNA-directed RNA polymerase activity"/>
    <property type="evidence" value="ECO:0007669"/>
    <property type="project" value="UniProtKB-UniRule"/>
</dbReference>
<dbReference type="GO" id="GO:0032549">
    <property type="term" value="F:ribonucleoside binding"/>
    <property type="evidence" value="ECO:0007669"/>
    <property type="project" value="InterPro"/>
</dbReference>
<dbReference type="GO" id="GO:0006351">
    <property type="term" value="P:DNA-templated transcription"/>
    <property type="evidence" value="ECO:0007669"/>
    <property type="project" value="UniProtKB-UniRule"/>
</dbReference>
<dbReference type="CDD" id="cd00653">
    <property type="entry name" value="RNA_pol_B_RPB2"/>
    <property type="match status" value="1"/>
</dbReference>
<dbReference type="FunFam" id="2.40.50.150:FF:000001">
    <property type="entry name" value="DNA-directed RNA polymerase subunit beta"/>
    <property type="match status" value="1"/>
</dbReference>
<dbReference type="FunFam" id="3.90.1800.10:FF:000005">
    <property type="entry name" value="DNA-directed RNA polymerase subunit beta"/>
    <property type="match status" value="1"/>
</dbReference>
<dbReference type="Gene3D" id="2.40.50.100">
    <property type="match status" value="1"/>
</dbReference>
<dbReference type="Gene3D" id="2.40.50.150">
    <property type="match status" value="1"/>
</dbReference>
<dbReference type="Gene3D" id="3.90.1100.10">
    <property type="match status" value="1"/>
</dbReference>
<dbReference type="Gene3D" id="2.30.150.10">
    <property type="entry name" value="DNA-directed RNA polymerase, beta subunit, external 1 domain"/>
    <property type="match status" value="1"/>
</dbReference>
<dbReference type="Gene3D" id="2.40.270.10">
    <property type="entry name" value="DNA-directed RNA polymerase, subunit 2, domain 6"/>
    <property type="match status" value="1"/>
</dbReference>
<dbReference type="Gene3D" id="3.90.1800.10">
    <property type="entry name" value="RNA polymerase alpha subunit dimerisation domain"/>
    <property type="match status" value="1"/>
</dbReference>
<dbReference type="Gene3D" id="3.90.1110.10">
    <property type="entry name" value="RNA polymerase Rpb2, domain 2"/>
    <property type="match status" value="1"/>
</dbReference>
<dbReference type="HAMAP" id="MF_01321">
    <property type="entry name" value="RNApol_bact_RpoB"/>
    <property type="match status" value="1"/>
</dbReference>
<dbReference type="InterPro" id="IPR042107">
    <property type="entry name" value="DNA-dir_RNA_pol_bsu_ext_1_sf"/>
</dbReference>
<dbReference type="InterPro" id="IPR019462">
    <property type="entry name" value="DNA-dir_RNA_pol_bsu_external_1"/>
</dbReference>
<dbReference type="InterPro" id="IPR015712">
    <property type="entry name" value="DNA-dir_RNA_pol_su2"/>
</dbReference>
<dbReference type="InterPro" id="IPR007120">
    <property type="entry name" value="DNA-dir_RNAP_su2_dom"/>
</dbReference>
<dbReference type="InterPro" id="IPR037033">
    <property type="entry name" value="DNA-dir_RNAP_su2_hyb_sf"/>
</dbReference>
<dbReference type="InterPro" id="IPR010243">
    <property type="entry name" value="RNA_pol_bsu_bac"/>
</dbReference>
<dbReference type="InterPro" id="IPR007121">
    <property type="entry name" value="RNA_pol_bsu_CS"/>
</dbReference>
<dbReference type="InterPro" id="IPR007644">
    <property type="entry name" value="RNA_pol_bsu_protrusion"/>
</dbReference>
<dbReference type="InterPro" id="IPR007642">
    <property type="entry name" value="RNA_pol_Rpb2_2"/>
</dbReference>
<dbReference type="InterPro" id="IPR037034">
    <property type="entry name" value="RNA_pol_Rpb2_2_sf"/>
</dbReference>
<dbReference type="InterPro" id="IPR007645">
    <property type="entry name" value="RNA_pol_Rpb2_3"/>
</dbReference>
<dbReference type="InterPro" id="IPR007641">
    <property type="entry name" value="RNA_pol_Rpb2_7"/>
</dbReference>
<dbReference type="InterPro" id="IPR014724">
    <property type="entry name" value="RNA_pol_RPB2_OB-fold"/>
</dbReference>
<dbReference type="NCBIfam" id="NF001616">
    <property type="entry name" value="PRK00405.1"/>
    <property type="match status" value="1"/>
</dbReference>
<dbReference type="NCBIfam" id="TIGR02013">
    <property type="entry name" value="rpoB"/>
    <property type="match status" value="1"/>
</dbReference>
<dbReference type="PANTHER" id="PTHR20856">
    <property type="entry name" value="DNA-DIRECTED RNA POLYMERASE I SUBUNIT 2"/>
    <property type="match status" value="1"/>
</dbReference>
<dbReference type="Pfam" id="PF04563">
    <property type="entry name" value="RNA_pol_Rpb2_1"/>
    <property type="match status" value="1"/>
</dbReference>
<dbReference type="Pfam" id="PF04561">
    <property type="entry name" value="RNA_pol_Rpb2_2"/>
    <property type="match status" value="1"/>
</dbReference>
<dbReference type="Pfam" id="PF04565">
    <property type="entry name" value="RNA_pol_Rpb2_3"/>
    <property type="match status" value="1"/>
</dbReference>
<dbReference type="Pfam" id="PF10385">
    <property type="entry name" value="RNA_pol_Rpb2_45"/>
    <property type="match status" value="1"/>
</dbReference>
<dbReference type="Pfam" id="PF00562">
    <property type="entry name" value="RNA_pol_Rpb2_6"/>
    <property type="match status" value="1"/>
</dbReference>
<dbReference type="Pfam" id="PF04560">
    <property type="entry name" value="RNA_pol_Rpb2_7"/>
    <property type="match status" value="1"/>
</dbReference>
<dbReference type="SUPFAM" id="SSF64484">
    <property type="entry name" value="beta and beta-prime subunits of DNA dependent RNA-polymerase"/>
    <property type="match status" value="1"/>
</dbReference>
<dbReference type="PROSITE" id="PS01166">
    <property type="entry name" value="RNA_POL_BETA"/>
    <property type="match status" value="1"/>
</dbReference>